<proteinExistence type="inferred from homology"/>
<sequence>MGSRLHVQVIHGGPPLPYKDDIRAFGKEYAEQLDAQDPLRRFRDEFIIPSKKDLKRKTLFPNDGMYSCGHPICFANTSCACVHAAETEETSDEKCIYLCGNSLGLQPRSTRKYIDHYLRTWATKGVTGHFVPHDDQLLPPFVDVDEAGAKLMAPIVGALKSEVAVMGTLTANLHLLMASFYRPTPERNKIIIEGKAFPSDHYAVESQIRHHNLDPKDAMVLIEPEDLDRPILDTKYILRVIDENAHSTALILLPAIQFYTGQYFDIQRITAHAQSKGILVGWDCAHAAGNVDLRLHDWNVDFAAWCTYKYLNAGPGGMAALFVHERHGRVDIEQAASGKEAFHPRFSGWWGGDKQTRFLMNNHFVPQQGAAGFQLSNPSVLDMNAVVASLELFNQTSMAEIRKKSLNLTGYLEHLLLRDPQTENSEKRPFSIITPSNPAERGAQLSIRLQPGLLDRVLESLNEDAVIIDERKPDVIRVAPAPLYNTYAEVWRFAQLFHLACDKALCGRK</sequence>
<comment type="function">
    <text evidence="1">Catalyzes the cleavage of L-kynurenine (L-Kyn) and L-3-hydroxykynurenine (L-3OHKyn) into anthranilic acid (AA) and 3-hydroxyanthranilic acid (3-OHAA), respectively.</text>
</comment>
<comment type="catalytic activity">
    <reaction evidence="1">
        <text>L-kynurenine + H2O = anthranilate + L-alanine + H(+)</text>
        <dbReference type="Rhea" id="RHEA:16813"/>
        <dbReference type="ChEBI" id="CHEBI:15377"/>
        <dbReference type="ChEBI" id="CHEBI:15378"/>
        <dbReference type="ChEBI" id="CHEBI:16567"/>
        <dbReference type="ChEBI" id="CHEBI:57959"/>
        <dbReference type="ChEBI" id="CHEBI:57972"/>
        <dbReference type="EC" id="3.7.1.3"/>
    </reaction>
</comment>
<comment type="catalytic activity">
    <reaction evidence="1">
        <text>3-hydroxy-L-kynurenine + H2O = 3-hydroxyanthranilate + L-alanine + H(+)</text>
        <dbReference type="Rhea" id="RHEA:25143"/>
        <dbReference type="ChEBI" id="CHEBI:15377"/>
        <dbReference type="ChEBI" id="CHEBI:15378"/>
        <dbReference type="ChEBI" id="CHEBI:36559"/>
        <dbReference type="ChEBI" id="CHEBI:57972"/>
        <dbReference type="ChEBI" id="CHEBI:58125"/>
        <dbReference type="EC" id="3.7.1.3"/>
    </reaction>
</comment>
<comment type="cofactor">
    <cofactor evidence="1">
        <name>pyridoxal 5'-phosphate</name>
        <dbReference type="ChEBI" id="CHEBI:597326"/>
    </cofactor>
</comment>
<comment type="pathway">
    <text evidence="1">Amino-acid degradation; L-kynurenine degradation; L-alanine and anthranilate from L-kynurenine: step 1/1.</text>
</comment>
<comment type="pathway">
    <text evidence="1">Cofactor biosynthesis; NAD(+) biosynthesis; quinolinate from L-kynurenine: step 2/3.</text>
</comment>
<comment type="subunit">
    <text evidence="1">Homodimer.</text>
</comment>
<comment type="subcellular location">
    <subcellularLocation>
        <location evidence="1">Cytoplasm</location>
    </subcellularLocation>
</comment>
<comment type="similarity">
    <text evidence="1">Belongs to the kynureninase family.</text>
</comment>
<feature type="chain" id="PRO_0000356965" description="Kynureninase 1">
    <location>
        <begin position="1"/>
        <end position="509"/>
    </location>
</feature>
<feature type="binding site" evidence="1">
    <location>
        <position position="169"/>
    </location>
    <ligand>
        <name>pyridoxal 5'-phosphate</name>
        <dbReference type="ChEBI" id="CHEBI:597326"/>
    </ligand>
</feature>
<feature type="binding site" evidence="1">
    <location>
        <position position="170"/>
    </location>
    <ligand>
        <name>pyridoxal 5'-phosphate</name>
        <dbReference type="ChEBI" id="CHEBI:597326"/>
    </ligand>
</feature>
<feature type="binding site" evidence="1">
    <location>
        <begin position="197"/>
        <end position="200"/>
    </location>
    <ligand>
        <name>pyridoxal 5'-phosphate</name>
        <dbReference type="ChEBI" id="CHEBI:597326"/>
    </ligand>
</feature>
<feature type="binding site" evidence="1">
    <location>
        <position position="283"/>
    </location>
    <ligand>
        <name>pyridoxal 5'-phosphate</name>
        <dbReference type="ChEBI" id="CHEBI:597326"/>
    </ligand>
</feature>
<feature type="binding site" evidence="1">
    <location>
        <position position="286"/>
    </location>
    <ligand>
        <name>pyridoxal 5'-phosphate</name>
        <dbReference type="ChEBI" id="CHEBI:597326"/>
    </ligand>
</feature>
<feature type="binding site" evidence="1">
    <location>
        <position position="308"/>
    </location>
    <ligand>
        <name>pyridoxal 5'-phosphate</name>
        <dbReference type="ChEBI" id="CHEBI:597326"/>
    </ligand>
</feature>
<feature type="binding site" evidence="1">
    <location>
        <position position="349"/>
    </location>
    <ligand>
        <name>pyridoxal 5'-phosphate</name>
        <dbReference type="ChEBI" id="CHEBI:597326"/>
    </ligand>
</feature>
<feature type="binding site" evidence="1">
    <location>
        <position position="377"/>
    </location>
    <ligand>
        <name>pyridoxal 5'-phosphate</name>
        <dbReference type="ChEBI" id="CHEBI:597326"/>
    </ligand>
</feature>
<feature type="modified residue" description="N6-(pyridoxal phosphate)lysine" evidence="1">
    <location>
        <position position="309"/>
    </location>
</feature>
<keyword id="KW-0963">Cytoplasm</keyword>
<keyword id="KW-0378">Hydrolase</keyword>
<keyword id="KW-0662">Pyridine nucleotide biosynthesis</keyword>
<keyword id="KW-0663">Pyridoxal phosphate</keyword>
<keyword id="KW-1185">Reference proteome</keyword>
<organism>
    <name type="scientific">Aspergillus fumigatus (strain ATCC MYA-4609 / CBS 101355 / FGSC A1100 / Af293)</name>
    <name type="common">Neosartorya fumigata</name>
    <dbReference type="NCBI Taxonomy" id="330879"/>
    <lineage>
        <taxon>Eukaryota</taxon>
        <taxon>Fungi</taxon>
        <taxon>Dikarya</taxon>
        <taxon>Ascomycota</taxon>
        <taxon>Pezizomycotina</taxon>
        <taxon>Eurotiomycetes</taxon>
        <taxon>Eurotiomycetidae</taxon>
        <taxon>Eurotiales</taxon>
        <taxon>Aspergillaceae</taxon>
        <taxon>Aspergillus</taxon>
        <taxon>Aspergillus subgen. Fumigati</taxon>
    </lineage>
</organism>
<accession>Q4X1D4</accession>
<protein>
    <recommendedName>
        <fullName evidence="1">Kynureninase 1</fullName>
        <ecNumber evidence="1">3.7.1.3</ecNumber>
    </recommendedName>
    <alternativeName>
        <fullName evidence="1">Biosynthesis of nicotinic acid protein 5-1</fullName>
    </alternativeName>
    <alternativeName>
        <fullName evidence="1">L-kynurenine hydrolase 1</fullName>
    </alternativeName>
</protein>
<name>KYNU1_ASPFU</name>
<evidence type="ECO:0000255" key="1">
    <source>
        <dbReference type="HAMAP-Rule" id="MF_03017"/>
    </source>
</evidence>
<dbReference type="EC" id="3.7.1.3" evidence="1"/>
<dbReference type="EMBL" id="AAHF01000001">
    <property type="protein sequence ID" value="EAL93331.1"/>
    <property type="molecule type" value="Genomic_DNA"/>
</dbReference>
<dbReference type="RefSeq" id="XP_755369.1">
    <property type="nucleotide sequence ID" value="XM_750276.1"/>
</dbReference>
<dbReference type="SMR" id="Q4X1D4"/>
<dbReference type="FunCoup" id="Q4X1D4">
    <property type="interactions" value="206"/>
</dbReference>
<dbReference type="STRING" id="330879.Q4X1D4"/>
<dbReference type="EnsemblFungi" id="EAL93331">
    <property type="protein sequence ID" value="EAL93331"/>
    <property type="gene ID" value="AFUA_2G10360"/>
</dbReference>
<dbReference type="GeneID" id="3512699"/>
<dbReference type="KEGG" id="afm:AFUA_2G10360"/>
<dbReference type="VEuPathDB" id="FungiDB:Afu2g10360"/>
<dbReference type="eggNOG" id="KOG3846">
    <property type="taxonomic scope" value="Eukaryota"/>
</dbReference>
<dbReference type="HOGENOM" id="CLU_003433_4_0_1"/>
<dbReference type="InParanoid" id="Q4X1D4"/>
<dbReference type="OMA" id="YTEVWEF"/>
<dbReference type="OrthoDB" id="5978656at2759"/>
<dbReference type="UniPathway" id="UPA00253">
    <property type="reaction ID" value="UER00329"/>
</dbReference>
<dbReference type="UniPathway" id="UPA00334">
    <property type="reaction ID" value="UER00455"/>
</dbReference>
<dbReference type="Proteomes" id="UP000002530">
    <property type="component" value="Chromosome 2"/>
</dbReference>
<dbReference type="GO" id="GO:0005737">
    <property type="term" value="C:cytoplasm"/>
    <property type="evidence" value="ECO:0000318"/>
    <property type="project" value="GO_Central"/>
</dbReference>
<dbReference type="GO" id="GO:0030429">
    <property type="term" value="F:kynureninase activity"/>
    <property type="evidence" value="ECO:0000318"/>
    <property type="project" value="GO_Central"/>
</dbReference>
<dbReference type="GO" id="GO:0030170">
    <property type="term" value="F:pyridoxal phosphate binding"/>
    <property type="evidence" value="ECO:0007669"/>
    <property type="project" value="UniProtKB-UniRule"/>
</dbReference>
<dbReference type="GO" id="GO:0034354">
    <property type="term" value="P:'de novo' NAD biosynthetic process from L-tryptophan"/>
    <property type="evidence" value="ECO:0007669"/>
    <property type="project" value="UniProtKB-UniRule"/>
</dbReference>
<dbReference type="GO" id="GO:0043420">
    <property type="term" value="P:anthranilate metabolic process"/>
    <property type="evidence" value="ECO:0000318"/>
    <property type="project" value="GO_Central"/>
</dbReference>
<dbReference type="GO" id="GO:0097053">
    <property type="term" value="P:L-kynurenine catabolic process"/>
    <property type="evidence" value="ECO:0007669"/>
    <property type="project" value="UniProtKB-UniRule"/>
</dbReference>
<dbReference type="GO" id="GO:0019441">
    <property type="term" value="P:L-tryptophan catabolic process to kynurenine"/>
    <property type="evidence" value="ECO:0000318"/>
    <property type="project" value="GO_Central"/>
</dbReference>
<dbReference type="GO" id="GO:0019805">
    <property type="term" value="P:quinolinate biosynthetic process"/>
    <property type="evidence" value="ECO:0007669"/>
    <property type="project" value="UniProtKB-UniRule"/>
</dbReference>
<dbReference type="FunFam" id="3.40.640.10:FF:000031">
    <property type="entry name" value="Kynureninase"/>
    <property type="match status" value="1"/>
</dbReference>
<dbReference type="Gene3D" id="3.90.1150.10">
    <property type="entry name" value="Aspartate Aminotransferase, domain 1"/>
    <property type="match status" value="1"/>
</dbReference>
<dbReference type="Gene3D" id="3.40.640.10">
    <property type="entry name" value="Type I PLP-dependent aspartate aminotransferase-like (Major domain)"/>
    <property type="match status" value="1"/>
</dbReference>
<dbReference type="HAMAP" id="MF_01970">
    <property type="entry name" value="Kynureninase"/>
    <property type="match status" value="1"/>
</dbReference>
<dbReference type="InterPro" id="IPR010111">
    <property type="entry name" value="Kynureninase"/>
</dbReference>
<dbReference type="InterPro" id="IPR015424">
    <property type="entry name" value="PyrdxlP-dep_Trfase"/>
</dbReference>
<dbReference type="InterPro" id="IPR015421">
    <property type="entry name" value="PyrdxlP-dep_Trfase_major"/>
</dbReference>
<dbReference type="InterPro" id="IPR015422">
    <property type="entry name" value="PyrdxlP-dep_Trfase_small"/>
</dbReference>
<dbReference type="NCBIfam" id="TIGR01814">
    <property type="entry name" value="kynureninase"/>
    <property type="match status" value="1"/>
</dbReference>
<dbReference type="PANTHER" id="PTHR14084">
    <property type="entry name" value="KYNURENINASE"/>
    <property type="match status" value="1"/>
</dbReference>
<dbReference type="PANTHER" id="PTHR14084:SF0">
    <property type="entry name" value="KYNURENINASE"/>
    <property type="match status" value="1"/>
</dbReference>
<dbReference type="Pfam" id="PF22580">
    <property type="entry name" value="KYNU_C"/>
    <property type="match status" value="1"/>
</dbReference>
<dbReference type="PIRSF" id="PIRSF038800">
    <property type="entry name" value="KYNU"/>
    <property type="match status" value="1"/>
</dbReference>
<dbReference type="SUPFAM" id="SSF53383">
    <property type="entry name" value="PLP-dependent transferases"/>
    <property type="match status" value="1"/>
</dbReference>
<reference key="1">
    <citation type="journal article" date="2005" name="Nature">
        <title>Genomic sequence of the pathogenic and allergenic filamentous fungus Aspergillus fumigatus.</title>
        <authorList>
            <person name="Nierman W.C."/>
            <person name="Pain A."/>
            <person name="Anderson M.J."/>
            <person name="Wortman J.R."/>
            <person name="Kim H.S."/>
            <person name="Arroyo J."/>
            <person name="Berriman M."/>
            <person name="Abe K."/>
            <person name="Archer D.B."/>
            <person name="Bermejo C."/>
            <person name="Bennett J.W."/>
            <person name="Bowyer P."/>
            <person name="Chen D."/>
            <person name="Collins M."/>
            <person name="Coulsen R."/>
            <person name="Davies R."/>
            <person name="Dyer P.S."/>
            <person name="Farman M.L."/>
            <person name="Fedorova N."/>
            <person name="Fedorova N.D."/>
            <person name="Feldblyum T.V."/>
            <person name="Fischer R."/>
            <person name="Fosker N."/>
            <person name="Fraser A."/>
            <person name="Garcia J.L."/>
            <person name="Garcia M.J."/>
            <person name="Goble A."/>
            <person name="Goldman G.H."/>
            <person name="Gomi K."/>
            <person name="Griffith-Jones S."/>
            <person name="Gwilliam R."/>
            <person name="Haas B.J."/>
            <person name="Haas H."/>
            <person name="Harris D.E."/>
            <person name="Horiuchi H."/>
            <person name="Huang J."/>
            <person name="Humphray S."/>
            <person name="Jimenez J."/>
            <person name="Keller N."/>
            <person name="Khouri H."/>
            <person name="Kitamoto K."/>
            <person name="Kobayashi T."/>
            <person name="Konzack S."/>
            <person name="Kulkarni R."/>
            <person name="Kumagai T."/>
            <person name="Lafton A."/>
            <person name="Latge J.-P."/>
            <person name="Li W."/>
            <person name="Lord A."/>
            <person name="Lu C."/>
            <person name="Majoros W.H."/>
            <person name="May G.S."/>
            <person name="Miller B.L."/>
            <person name="Mohamoud Y."/>
            <person name="Molina M."/>
            <person name="Monod M."/>
            <person name="Mouyna I."/>
            <person name="Mulligan S."/>
            <person name="Murphy L.D."/>
            <person name="O'Neil S."/>
            <person name="Paulsen I."/>
            <person name="Penalva M.A."/>
            <person name="Pertea M."/>
            <person name="Price C."/>
            <person name="Pritchard B.L."/>
            <person name="Quail M.A."/>
            <person name="Rabbinowitsch E."/>
            <person name="Rawlins N."/>
            <person name="Rajandream M.A."/>
            <person name="Reichard U."/>
            <person name="Renauld H."/>
            <person name="Robson G.D."/>
            <person name="Rodriguez de Cordoba S."/>
            <person name="Rodriguez-Pena J.M."/>
            <person name="Ronning C.M."/>
            <person name="Rutter S."/>
            <person name="Salzberg S.L."/>
            <person name="Sanchez M."/>
            <person name="Sanchez-Ferrero J.C."/>
            <person name="Saunders D."/>
            <person name="Seeger K."/>
            <person name="Squares R."/>
            <person name="Squares S."/>
            <person name="Takeuchi M."/>
            <person name="Tekaia F."/>
            <person name="Turner G."/>
            <person name="Vazquez de Aldana C.R."/>
            <person name="Weidman J."/>
            <person name="White O."/>
            <person name="Woodward J.R."/>
            <person name="Yu J.-H."/>
            <person name="Fraser C.M."/>
            <person name="Galagan J.E."/>
            <person name="Asai K."/>
            <person name="Machida M."/>
            <person name="Hall N."/>
            <person name="Barrell B.G."/>
            <person name="Denning D.W."/>
        </authorList>
    </citation>
    <scope>NUCLEOTIDE SEQUENCE [LARGE SCALE GENOMIC DNA]</scope>
    <source>
        <strain>ATCC MYA-4609 / CBS 101355 / FGSC A1100 / Af293</strain>
    </source>
</reference>
<gene>
    <name type="primary">bna5-1</name>
    <name type="ORF">AFUA_2G10360</name>
</gene>